<accession>Q8F352</accession>
<reference key="1">
    <citation type="journal article" date="2003" name="Nature">
        <title>Unique physiological and pathogenic features of Leptospira interrogans revealed by whole-genome sequencing.</title>
        <authorList>
            <person name="Ren S.-X."/>
            <person name="Fu G."/>
            <person name="Jiang X.-G."/>
            <person name="Zeng R."/>
            <person name="Miao Y.-G."/>
            <person name="Xu H."/>
            <person name="Zhang Y.-X."/>
            <person name="Xiong H."/>
            <person name="Lu G."/>
            <person name="Lu L.-F."/>
            <person name="Jiang H.-Q."/>
            <person name="Jia J."/>
            <person name="Tu Y.-F."/>
            <person name="Jiang J.-X."/>
            <person name="Gu W.-Y."/>
            <person name="Zhang Y.-Q."/>
            <person name="Cai Z."/>
            <person name="Sheng H.-H."/>
            <person name="Yin H.-F."/>
            <person name="Zhang Y."/>
            <person name="Zhu G.-F."/>
            <person name="Wan M."/>
            <person name="Huang H.-L."/>
            <person name="Qian Z."/>
            <person name="Wang S.-Y."/>
            <person name="Ma W."/>
            <person name="Yao Z.-J."/>
            <person name="Shen Y."/>
            <person name="Qiang B.-Q."/>
            <person name="Xia Q.-C."/>
            <person name="Guo X.-K."/>
            <person name="Danchin A."/>
            <person name="Saint Girons I."/>
            <person name="Somerville R.L."/>
            <person name="Wen Y.-M."/>
            <person name="Shi M.-H."/>
            <person name="Chen Z."/>
            <person name="Xu J.-G."/>
            <person name="Zhao G.-P."/>
        </authorList>
    </citation>
    <scope>NUCLEOTIDE SEQUENCE [LARGE SCALE GENOMIC DNA]</scope>
    <source>
        <strain>56601</strain>
    </source>
</reference>
<evidence type="ECO:0000255" key="1">
    <source>
        <dbReference type="HAMAP-Rule" id="MF_00444"/>
    </source>
</evidence>
<name>CLPP_LEPIN</name>
<sequence>MSVIPYVIEQTSRGERSYDIFSRLLKDRIIFLGNAINDDYANVITAQLLFLEAENPERDIYLYLNSPGGYVSSGLAIYDTMQYIKPDVRTLCLGQASSMAALLLAGGAAGKRSALPNARIMMHQPMGGATGQASDIEIQAREVLKLKEILNSIYHKHTGKTVEQIQKDTERNFYMTADEAKNYGIIDTVIQIDRKQTE</sequence>
<feature type="chain" id="PRO_0000179583" description="ATP-dependent Clp protease proteolytic subunit">
    <location>
        <begin position="1"/>
        <end position="198"/>
    </location>
</feature>
<feature type="active site" description="Nucleophile" evidence="1">
    <location>
        <position position="98"/>
    </location>
</feature>
<feature type="active site" evidence="1">
    <location>
        <position position="123"/>
    </location>
</feature>
<keyword id="KW-0963">Cytoplasm</keyword>
<keyword id="KW-0378">Hydrolase</keyword>
<keyword id="KW-0645">Protease</keyword>
<keyword id="KW-1185">Reference proteome</keyword>
<keyword id="KW-0720">Serine protease</keyword>
<proteinExistence type="inferred from homology"/>
<organism>
    <name type="scientific">Leptospira interrogans serogroup Icterohaemorrhagiae serovar Lai (strain 56601)</name>
    <dbReference type="NCBI Taxonomy" id="189518"/>
    <lineage>
        <taxon>Bacteria</taxon>
        <taxon>Pseudomonadati</taxon>
        <taxon>Spirochaetota</taxon>
        <taxon>Spirochaetia</taxon>
        <taxon>Leptospirales</taxon>
        <taxon>Leptospiraceae</taxon>
        <taxon>Leptospira</taxon>
    </lineage>
</organism>
<protein>
    <recommendedName>
        <fullName evidence="1">ATP-dependent Clp protease proteolytic subunit</fullName>
        <ecNumber evidence="1">3.4.21.92</ecNumber>
    </recommendedName>
    <alternativeName>
        <fullName evidence="1">Endopeptidase Clp</fullName>
    </alternativeName>
</protein>
<dbReference type="EC" id="3.4.21.92" evidence="1"/>
<dbReference type="EMBL" id="AE010300">
    <property type="protein sequence ID" value="AAN49758.1"/>
    <property type="molecule type" value="Genomic_DNA"/>
</dbReference>
<dbReference type="RefSeq" id="NP_712740.1">
    <property type="nucleotide sequence ID" value="NC_004342.2"/>
</dbReference>
<dbReference type="RefSeq" id="WP_000111455.1">
    <property type="nucleotide sequence ID" value="NC_004342.2"/>
</dbReference>
<dbReference type="SMR" id="Q8F352"/>
<dbReference type="FunCoup" id="Q8F352">
    <property type="interactions" value="430"/>
</dbReference>
<dbReference type="STRING" id="189518.LA_2559"/>
<dbReference type="MEROPS" id="S14.001"/>
<dbReference type="PaxDb" id="189518-LA_2559"/>
<dbReference type="EnsemblBacteria" id="AAN49758">
    <property type="protein sequence ID" value="AAN49758"/>
    <property type="gene ID" value="LA_2559"/>
</dbReference>
<dbReference type="GeneID" id="61144720"/>
<dbReference type="KEGG" id="lil:LA_2559"/>
<dbReference type="PATRIC" id="fig|189518.3.peg.2544"/>
<dbReference type="HOGENOM" id="CLU_058707_3_2_12"/>
<dbReference type="InParanoid" id="Q8F352"/>
<dbReference type="OrthoDB" id="9802800at2"/>
<dbReference type="PRO" id="PR:Q8F352"/>
<dbReference type="Proteomes" id="UP000001408">
    <property type="component" value="Chromosome I"/>
</dbReference>
<dbReference type="GO" id="GO:0005737">
    <property type="term" value="C:cytoplasm"/>
    <property type="evidence" value="ECO:0007669"/>
    <property type="project" value="UniProtKB-SubCell"/>
</dbReference>
<dbReference type="GO" id="GO:0009368">
    <property type="term" value="C:endopeptidase Clp complex"/>
    <property type="evidence" value="ECO:0000318"/>
    <property type="project" value="GO_Central"/>
</dbReference>
<dbReference type="GO" id="GO:0004176">
    <property type="term" value="F:ATP-dependent peptidase activity"/>
    <property type="evidence" value="ECO:0000318"/>
    <property type="project" value="GO_Central"/>
</dbReference>
<dbReference type="GO" id="GO:0051117">
    <property type="term" value="F:ATPase binding"/>
    <property type="evidence" value="ECO:0000318"/>
    <property type="project" value="GO_Central"/>
</dbReference>
<dbReference type="GO" id="GO:0004252">
    <property type="term" value="F:serine-type endopeptidase activity"/>
    <property type="evidence" value="ECO:0000318"/>
    <property type="project" value="GO_Central"/>
</dbReference>
<dbReference type="GO" id="GO:0006515">
    <property type="term" value="P:protein quality control for misfolded or incompletely synthesized proteins"/>
    <property type="evidence" value="ECO:0000318"/>
    <property type="project" value="GO_Central"/>
</dbReference>
<dbReference type="CDD" id="cd07017">
    <property type="entry name" value="S14_ClpP_2"/>
    <property type="match status" value="1"/>
</dbReference>
<dbReference type="FunFam" id="3.90.226.10:FF:000059">
    <property type="entry name" value="ATP-dependent Clp protease proteolytic subunit"/>
    <property type="match status" value="1"/>
</dbReference>
<dbReference type="Gene3D" id="3.90.226.10">
    <property type="entry name" value="2-enoyl-CoA Hydratase, Chain A, domain 1"/>
    <property type="match status" value="1"/>
</dbReference>
<dbReference type="HAMAP" id="MF_00444">
    <property type="entry name" value="ClpP"/>
    <property type="match status" value="1"/>
</dbReference>
<dbReference type="InterPro" id="IPR001907">
    <property type="entry name" value="ClpP"/>
</dbReference>
<dbReference type="InterPro" id="IPR029045">
    <property type="entry name" value="ClpP/crotonase-like_dom_sf"/>
</dbReference>
<dbReference type="InterPro" id="IPR023562">
    <property type="entry name" value="ClpP/TepA"/>
</dbReference>
<dbReference type="InterPro" id="IPR033135">
    <property type="entry name" value="ClpP_His_AS"/>
</dbReference>
<dbReference type="InterPro" id="IPR018215">
    <property type="entry name" value="ClpP_Ser_AS"/>
</dbReference>
<dbReference type="NCBIfam" id="TIGR00493">
    <property type="entry name" value="clpP"/>
    <property type="match status" value="1"/>
</dbReference>
<dbReference type="NCBIfam" id="NF001368">
    <property type="entry name" value="PRK00277.1"/>
    <property type="match status" value="1"/>
</dbReference>
<dbReference type="NCBIfam" id="NF009205">
    <property type="entry name" value="PRK12553.1"/>
    <property type="match status" value="1"/>
</dbReference>
<dbReference type="PANTHER" id="PTHR10381">
    <property type="entry name" value="ATP-DEPENDENT CLP PROTEASE PROTEOLYTIC SUBUNIT"/>
    <property type="match status" value="1"/>
</dbReference>
<dbReference type="PANTHER" id="PTHR10381:SF70">
    <property type="entry name" value="ATP-DEPENDENT CLP PROTEASE PROTEOLYTIC SUBUNIT"/>
    <property type="match status" value="1"/>
</dbReference>
<dbReference type="Pfam" id="PF00574">
    <property type="entry name" value="CLP_protease"/>
    <property type="match status" value="1"/>
</dbReference>
<dbReference type="PRINTS" id="PR00127">
    <property type="entry name" value="CLPPROTEASEP"/>
</dbReference>
<dbReference type="SUPFAM" id="SSF52096">
    <property type="entry name" value="ClpP/crotonase"/>
    <property type="match status" value="1"/>
</dbReference>
<dbReference type="PROSITE" id="PS00382">
    <property type="entry name" value="CLP_PROTEASE_HIS"/>
    <property type="match status" value="1"/>
</dbReference>
<dbReference type="PROSITE" id="PS00381">
    <property type="entry name" value="CLP_PROTEASE_SER"/>
    <property type="match status" value="1"/>
</dbReference>
<comment type="function">
    <text evidence="1">Cleaves peptides in various proteins in a process that requires ATP hydrolysis. Has a chymotrypsin-like activity. Plays a major role in the degradation of misfolded proteins.</text>
</comment>
<comment type="catalytic activity">
    <reaction evidence="1">
        <text>Hydrolysis of proteins to small peptides in the presence of ATP and magnesium. alpha-casein is the usual test substrate. In the absence of ATP, only oligopeptides shorter than five residues are hydrolyzed (such as succinyl-Leu-Tyr-|-NHMec, and Leu-Tyr-Leu-|-Tyr-Trp, in which cleavage of the -Tyr-|-Leu- and -Tyr-|-Trp bonds also occurs).</text>
        <dbReference type="EC" id="3.4.21.92"/>
    </reaction>
</comment>
<comment type="subunit">
    <text evidence="1">Fourteen ClpP subunits assemble into 2 heptameric rings which stack back to back to give a disk-like structure with a central cavity, resembling the structure of eukaryotic proteasomes.</text>
</comment>
<comment type="subcellular location">
    <subcellularLocation>
        <location evidence="1">Cytoplasm</location>
    </subcellularLocation>
</comment>
<comment type="similarity">
    <text evidence="1">Belongs to the peptidase S14 family.</text>
</comment>
<gene>
    <name evidence="1" type="primary">clpP</name>
    <name type="ordered locus">LA_2559</name>
</gene>